<organism>
    <name type="scientific">Mus musculus</name>
    <name type="common">Mouse</name>
    <dbReference type="NCBI Taxonomy" id="10090"/>
    <lineage>
        <taxon>Eukaryota</taxon>
        <taxon>Metazoa</taxon>
        <taxon>Chordata</taxon>
        <taxon>Craniata</taxon>
        <taxon>Vertebrata</taxon>
        <taxon>Euteleostomi</taxon>
        <taxon>Mammalia</taxon>
        <taxon>Eutheria</taxon>
        <taxon>Euarchontoglires</taxon>
        <taxon>Glires</taxon>
        <taxon>Rodentia</taxon>
        <taxon>Myomorpha</taxon>
        <taxon>Muroidea</taxon>
        <taxon>Muridae</taxon>
        <taxon>Murinae</taxon>
        <taxon>Mus</taxon>
        <taxon>Mus</taxon>
    </lineage>
</organism>
<protein>
    <recommendedName>
        <fullName>Bleomycin hydrolase</fullName>
        <shortName>BH</shortName>
        <shortName>BLM hydrolase</shortName>
        <shortName>BMH</shortName>
        <ecNumber>3.4.22.40</ecNumber>
    </recommendedName>
</protein>
<proteinExistence type="evidence at protein level"/>
<accession>Q8R016</accession>
<accession>Q3TJR8</accession>
<accession>Q8BLZ4</accession>
<accession>Q8BZH9</accession>
<accession>Q8C111</accession>
<accession>Q8CID9</accession>
<keyword id="KW-0007">Acetylation</keyword>
<keyword id="KW-0963">Cytoplasm</keyword>
<keyword id="KW-0378">Hydrolase</keyword>
<keyword id="KW-0645">Protease</keyword>
<keyword id="KW-1185">Reference proteome</keyword>
<keyword id="KW-0788">Thiol protease</keyword>
<evidence type="ECO:0000250" key="1"/>
<evidence type="ECO:0000250" key="2">
    <source>
        <dbReference type="UniProtKB" id="P70645"/>
    </source>
</evidence>
<evidence type="ECO:0000250" key="3">
    <source>
        <dbReference type="UniProtKB" id="Q13867"/>
    </source>
</evidence>
<evidence type="ECO:0000255" key="4">
    <source>
        <dbReference type="PROSITE-ProRule" id="PRU10088"/>
    </source>
</evidence>
<evidence type="ECO:0000305" key="5"/>
<evidence type="ECO:0007744" key="6">
    <source>
    </source>
</evidence>
<feature type="chain" id="PRO_0000050551" description="Bleomycin hydrolase">
    <location>
        <begin position="1"/>
        <end position="455"/>
    </location>
</feature>
<feature type="active site" evidence="4">
    <location>
        <position position="73"/>
    </location>
</feature>
<feature type="active site" evidence="4">
    <location>
        <position position="372"/>
    </location>
</feature>
<feature type="active site" evidence="4">
    <location>
        <position position="396"/>
    </location>
</feature>
<feature type="modified residue" description="N-acetylmethionine" evidence="2">
    <location>
        <position position="1"/>
    </location>
</feature>
<feature type="modified residue" description="N6-acetyllysine" evidence="6">
    <location>
        <position position="391"/>
    </location>
</feature>
<feature type="sequence conflict" description="In Ref. 1; BAC28989." evidence="5" ref="1">
    <original>Q</original>
    <variation>K</variation>
    <location>
        <position position="16"/>
    </location>
</feature>
<feature type="sequence conflict" description="In Ref. 3; AAH24090." evidence="5" ref="3">
    <original>V</original>
    <variation>A</variation>
    <location>
        <position position="151"/>
    </location>
</feature>
<feature type="sequence conflict" description="In Ref. 1; BAC30706." evidence="5" ref="1">
    <original>K</original>
    <variation>R</variation>
    <location>
        <position position="391"/>
    </location>
</feature>
<name>BLMH_MOUSE</name>
<dbReference type="EC" id="3.4.22.40"/>
<dbReference type="EMBL" id="AK035228">
    <property type="protein sequence ID" value="BAC28989.1"/>
    <property type="molecule type" value="mRNA"/>
</dbReference>
<dbReference type="EMBL" id="AK040799">
    <property type="protein sequence ID" value="BAC30706.1"/>
    <property type="molecule type" value="mRNA"/>
</dbReference>
<dbReference type="EMBL" id="AK051441">
    <property type="protein sequence ID" value="BAC34639.1"/>
    <property type="molecule type" value="mRNA"/>
</dbReference>
<dbReference type="EMBL" id="AK053872">
    <property type="protein sequence ID" value="BAC35568.1"/>
    <property type="molecule type" value="mRNA"/>
</dbReference>
<dbReference type="EMBL" id="AK150438">
    <property type="protein sequence ID" value="BAE29560.1"/>
    <property type="molecule type" value="mRNA"/>
</dbReference>
<dbReference type="EMBL" id="AK167325">
    <property type="protein sequence ID" value="BAE39427.1"/>
    <property type="molecule type" value="mRNA"/>
</dbReference>
<dbReference type="EMBL" id="AL603842">
    <property type="status" value="NOT_ANNOTATED_CDS"/>
    <property type="molecule type" value="Genomic_DNA"/>
</dbReference>
<dbReference type="EMBL" id="BC024090">
    <property type="protein sequence ID" value="AAH24090.1"/>
    <property type="molecule type" value="mRNA"/>
</dbReference>
<dbReference type="EMBL" id="BC027037">
    <property type="protein sequence ID" value="AAH27037.1"/>
    <property type="molecule type" value="mRNA"/>
</dbReference>
<dbReference type="EMBL" id="BC027362">
    <property type="protein sequence ID" value="AAH27362.1"/>
    <property type="molecule type" value="mRNA"/>
</dbReference>
<dbReference type="EMBL" id="BC027403">
    <property type="protein sequence ID" value="AAH27403.1"/>
    <property type="molecule type" value="mRNA"/>
</dbReference>
<dbReference type="CCDS" id="CCDS25073.1"/>
<dbReference type="RefSeq" id="NP_848760.1">
    <property type="nucleotide sequence ID" value="NM_178645.4"/>
</dbReference>
<dbReference type="SMR" id="Q8R016"/>
<dbReference type="BioGRID" id="222434">
    <property type="interactions" value="13"/>
</dbReference>
<dbReference type="FunCoup" id="Q8R016">
    <property type="interactions" value="2444"/>
</dbReference>
<dbReference type="STRING" id="10090.ENSMUSP00000021197"/>
<dbReference type="MEROPS" id="C01.084"/>
<dbReference type="iPTMnet" id="Q8R016"/>
<dbReference type="MetOSite" id="Q8R016"/>
<dbReference type="PhosphoSitePlus" id="Q8R016"/>
<dbReference type="SwissPalm" id="Q8R016"/>
<dbReference type="CPTAC" id="non-CPTAC-3322"/>
<dbReference type="jPOST" id="Q8R016"/>
<dbReference type="PaxDb" id="10090-ENSMUSP00000021197"/>
<dbReference type="PeptideAtlas" id="Q8R016"/>
<dbReference type="ProteomicsDB" id="273499"/>
<dbReference type="Pumba" id="Q8R016"/>
<dbReference type="Antibodypedia" id="15119">
    <property type="antibodies" value="266 antibodies from 32 providers"/>
</dbReference>
<dbReference type="DNASU" id="104184"/>
<dbReference type="Ensembl" id="ENSMUST00000021197.10">
    <property type="protein sequence ID" value="ENSMUSP00000021197.4"/>
    <property type="gene ID" value="ENSMUSG00000020840.11"/>
</dbReference>
<dbReference type="GeneID" id="104184"/>
<dbReference type="KEGG" id="mmu:104184"/>
<dbReference type="UCSC" id="uc007kge.2">
    <property type="organism name" value="mouse"/>
</dbReference>
<dbReference type="AGR" id="MGI:1345186"/>
<dbReference type="CTD" id="642"/>
<dbReference type="MGI" id="MGI:1345186">
    <property type="gene designation" value="Blmh"/>
</dbReference>
<dbReference type="VEuPathDB" id="HostDB:ENSMUSG00000020840"/>
<dbReference type="eggNOG" id="KOG4128">
    <property type="taxonomic scope" value="Eukaryota"/>
</dbReference>
<dbReference type="GeneTree" id="ENSGT00390000001735"/>
<dbReference type="HOGENOM" id="CLU_038600_0_0_1"/>
<dbReference type="InParanoid" id="Q8R016"/>
<dbReference type="OMA" id="QSYTFFW"/>
<dbReference type="OrthoDB" id="2666448at2759"/>
<dbReference type="PhylomeDB" id="Q8R016"/>
<dbReference type="TreeFam" id="TF323372"/>
<dbReference type="BRENDA" id="3.4.22.40">
    <property type="organism ID" value="3474"/>
</dbReference>
<dbReference type="Reactome" id="R-MMU-983168">
    <property type="pathway name" value="Antigen processing: Ubiquitination &amp; Proteasome degradation"/>
</dbReference>
<dbReference type="BioGRID-ORCS" id="104184">
    <property type="hits" value="1 hit in 78 CRISPR screens"/>
</dbReference>
<dbReference type="ChiTaRS" id="Blmh">
    <property type="organism name" value="mouse"/>
</dbReference>
<dbReference type="PRO" id="PR:Q8R016"/>
<dbReference type="Proteomes" id="UP000000589">
    <property type="component" value="Chromosome 11"/>
</dbReference>
<dbReference type="RNAct" id="Q8R016">
    <property type="molecule type" value="protein"/>
</dbReference>
<dbReference type="Bgee" id="ENSMUSG00000020840">
    <property type="expression patterns" value="Expressed in bone fossa and 272 other cell types or tissues"/>
</dbReference>
<dbReference type="ExpressionAtlas" id="Q8R016">
    <property type="expression patterns" value="baseline and differential"/>
</dbReference>
<dbReference type="GO" id="GO:0005737">
    <property type="term" value="C:cytoplasm"/>
    <property type="evidence" value="ECO:0000250"/>
    <property type="project" value="UniProtKB"/>
</dbReference>
<dbReference type="GO" id="GO:0070005">
    <property type="term" value="F:cysteine-type aminopeptidase activity"/>
    <property type="evidence" value="ECO:0007669"/>
    <property type="project" value="InterPro"/>
</dbReference>
<dbReference type="GO" id="GO:0004197">
    <property type="term" value="F:cysteine-type endopeptidase activity"/>
    <property type="evidence" value="ECO:0007669"/>
    <property type="project" value="UniProtKB-EC"/>
</dbReference>
<dbReference type="GO" id="GO:0042802">
    <property type="term" value="F:identical protein binding"/>
    <property type="evidence" value="ECO:0007669"/>
    <property type="project" value="Ensembl"/>
</dbReference>
<dbReference type="GO" id="GO:0008233">
    <property type="term" value="F:peptidase activity"/>
    <property type="evidence" value="ECO:0000315"/>
    <property type="project" value="MGI"/>
</dbReference>
<dbReference type="GO" id="GO:0006508">
    <property type="term" value="P:proteolysis"/>
    <property type="evidence" value="ECO:0007669"/>
    <property type="project" value="UniProtKB-KW"/>
</dbReference>
<dbReference type="GO" id="GO:0009636">
    <property type="term" value="P:response to toxic substance"/>
    <property type="evidence" value="ECO:0000315"/>
    <property type="project" value="MGI"/>
</dbReference>
<dbReference type="GO" id="GO:0009410">
    <property type="term" value="P:response to xenobiotic stimulus"/>
    <property type="evidence" value="ECO:0000315"/>
    <property type="project" value="MGI"/>
</dbReference>
<dbReference type="CDD" id="cd00585">
    <property type="entry name" value="Peptidase_C1B"/>
    <property type="match status" value="1"/>
</dbReference>
<dbReference type="FunFam" id="3.90.70.10:FF:000021">
    <property type="entry name" value="Bleomycin hydrolase"/>
    <property type="match status" value="1"/>
</dbReference>
<dbReference type="Gene3D" id="3.90.70.10">
    <property type="entry name" value="Cysteine proteinases"/>
    <property type="match status" value="1"/>
</dbReference>
<dbReference type="InterPro" id="IPR038765">
    <property type="entry name" value="Papain-like_cys_pep_sf"/>
</dbReference>
<dbReference type="InterPro" id="IPR000169">
    <property type="entry name" value="Pept_cys_AS"/>
</dbReference>
<dbReference type="InterPro" id="IPR004134">
    <property type="entry name" value="Peptidase_C1B"/>
</dbReference>
<dbReference type="PANTHER" id="PTHR10363">
    <property type="entry name" value="BLEOMYCIN HYDROLASE"/>
    <property type="match status" value="1"/>
</dbReference>
<dbReference type="PANTHER" id="PTHR10363:SF2">
    <property type="entry name" value="BLEOMYCIN HYDROLASE"/>
    <property type="match status" value="1"/>
</dbReference>
<dbReference type="Pfam" id="PF03051">
    <property type="entry name" value="Peptidase_C1_2"/>
    <property type="match status" value="1"/>
</dbReference>
<dbReference type="PIRSF" id="PIRSF005700">
    <property type="entry name" value="PepC"/>
    <property type="match status" value="1"/>
</dbReference>
<dbReference type="SUPFAM" id="SSF54001">
    <property type="entry name" value="Cysteine proteinases"/>
    <property type="match status" value="1"/>
</dbReference>
<dbReference type="PROSITE" id="PS00139">
    <property type="entry name" value="THIOL_PROTEASE_CYS"/>
    <property type="match status" value="1"/>
</dbReference>
<sequence>MNNAGLNSEKVSALIQKLNSDPQFVLAQNVGTTHDLLDICLRRATVQGAQHVFQHVVPQEGKPVTNQKSSGRCWIFSCLNVMRLPFMKKFNIEEFEFSQSYLFFWDKVERCYFFLNAFVDTAQKKEPEDGRLVQYLLMNPTNDGGQWDMLVNIVEKYGVVPKKCFPESHTTEATRRMNDILNHKMREFCIRLRNLVHSGATKGEISSTQDAMMEEIFRVVCICLGNPPETFTWEYRDKDKNYHKIGPITPLQFYKEHVKPLFNMEDKICFVNDPRPQHKYNKLYTVDYLSNMVGGRKTLYNNQPIDFLKKMVAASIKDGEAVWFGCDVGKHFNGKLGLSDMNVYDHELVFGVSLKNMNKAERLAFGESLMTHAMTFTAVSEKDNQEGTFVKWRVENSWGEDHGHKGYLCMTDEWFSEYVYEVVVDKKHVPEEVLAVLEQEPIVLPAWDPMGALAE</sequence>
<gene>
    <name type="primary">Blmh</name>
</gene>
<reference key="1">
    <citation type="journal article" date="2005" name="Science">
        <title>The transcriptional landscape of the mammalian genome.</title>
        <authorList>
            <person name="Carninci P."/>
            <person name="Kasukawa T."/>
            <person name="Katayama S."/>
            <person name="Gough J."/>
            <person name="Frith M.C."/>
            <person name="Maeda N."/>
            <person name="Oyama R."/>
            <person name="Ravasi T."/>
            <person name="Lenhard B."/>
            <person name="Wells C."/>
            <person name="Kodzius R."/>
            <person name="Shimokawa K."/>
            <person name="Bajic V.B."/>
            <person name="Brenner S.E."/>
            <person name="Batalov S."/>
            <person name="Forrest A.R."/>
            <person name="Zavolan M."/>
            <person name="Davis M.J."/>
            <person name="Wilming L.G."/>
            <person name="Aidinis V."/>
            <person name="Allen J.E."/>
            <person name="Ambesi-Impiombato A."/>
            <person name="Apweiler R."/>
            <person name="Aturaliya R.N."/>
            <person name="Bailey T.L."/>
            <person name="Bansal M."/>
            <person name="Baxter L."/>
            <person name="Beisel K.W."/>
            <person name="Bersano T."/>
            <person name="Bono H."/>
            <person name="Chalk A.M."/>
            <person name="Chiu K.P."/>
            <person name="Choudhary V."/>
            <person name="Christoffels A."/>
            <person name="Clutterbuck D.R."/>
            <person name="Crowe M.L."/>
            <person name="Dalla E."/>
            <person name="Dalrymple B.P."/>
            <person name="de Bono B."/>
            <person name="Della Gatta G."/>
            <person name="di Bernardo D."/>
            <person name="Down T."/>
            <person name="Engstrom P."/>
            <person name="Fagiolini M."/>
            <person name="Faulkner G."/>
            <person name="Fletcher C.F."/>
            <person name="Fukushima T."/>
            <person name="Furuno M."/>
            <person name="Futaki S."/>
            <person name="Gariboldi M."/>
            <person name="Georgii-Hemming P."/>
            <person name="Gingeras T.R."/>
            <person name="Gojobori T."/>
            <person name="Green R.E."/>
            <person name="Gustincich S."/>
            <person name="Harbers M."/>
            <person name="Hayashi Y."/>
            <person name="Hensch T.K."/>
            <person name="Hirokawa N."/>
            <person name="Hill D."/>
            <person name="Huminiecki L."/>
            <person name="Iacono M."/>
            <person name="Ikeo K."/>
            <person name="Iwama A."/>
            <person name="Ishikawa T."/>
            <person name="Jakt M."/>
            <person name="Kanapin A."/>
            <person name="Katoh M."/>
            <person name="Kawasawa Y."/>
            <person name="Kelso J."/>
            <person name="Kitamura H."/>
            <person name="Kitano H."/>
            <person name="Kollias G."/>
            <person name="Krishnan S.P."/>
            <person name="Kruger A."/>
            <person name="Kummerfeld S.K."/>
            <person name="Kurochkin I.V."/>
            <person name="Lareau L.F."/>
            <person name="Lazarevic D."/>
            <person name="Lipovich L."/>
            <person name="Liu J."/>
            <person name="Liuni S."/>
            <person name="McWilliam S."/>
            <person name="Madan Babu M."/>
            <person name="Madera M."/>
            <person name="Marchionni L."/>
            <person name="Matsuda H."/>
            <person name="Matsuzawa S."/>
            <person name="Miki H."/>
            <person name="Mignone F."/>
            <person name="Miyake S."/>
            <person name="Morris K."/>
            <person name="Mottagui-Tabar S."/>
            <person name="Mulder N."/>
            <person name="Nakano N."/>
            <person name="Nakauchi H."/>
            <person name="Ng P."/>
            <person name="Nilsson R."/>
            <person name="Nishiguchi S."/>
            <person name="Nishikawa S."/>
            <person name="Nori F."/>
            <person name="Ohara O."/>
            <person name="Okazaki Y."/>
            <person name="Orlando V."/>
            <person name="Pang K.C."/>
            <person name="Pavan W.J."/>
            <person name="Pavesi G."/>
            <person name="Pesole G."/>
            <person name="Petrovsky N."/>
            <person name="Piazza S."/>
            <person name="Reed J."/>
            <person name="Reid J.F."/>
            <person name="Ring B.Z."/>
            <person name="Ringwald M."/>
            <person name="Rost B."/>
            <person name="Ruan Y."/>
            <person name="Salzberg S.L."/>
            <person name="Sandelin A."/>
            <person name="Schneider C."/>
            <person name="Schoenbach C."/>
            <person name="Sekiguchi K."/>
            <person name="Semple C.A."/>
            <person name="Seno S."/>
            <person name="Sessa L."/>
            <person name="Sheng Y."/>
            <person name="Shibata Y."/>
            <person name="Shimada H."/>
            <person name="Shimada K."/>
            <person name="Silva D."/>
            <person name="Sinclair B."/>
            <person name="Sperling S."/>
            <person name="Stupka E."/>
            <person name="Sugiura K."/>
            <person name="Sultana R."/>
            <person name="Takenaka Y."/>
            <person name="Taki K."/>
            <person name="Tammoja K."/>
            <person name="Tan S.L."/>
            <person name="Tang S."/>
            <person name="Taylor M.S."/>
            <person name="Tegner J."/>
            <person name="Teichmann S.A."/>
            <person name="Ueda H.R."/>
            <person name="van Nimwegen E."/>
            <person name="Verardo R."/>
            <person name="Wei C.L."/>
            <person name="Yagi K."/>
            <person name="Yamanishi H."/>
            <person name="Zabarovsky E."/>
            <person name="Zhu S."/>
            <person name="Zimmer A."/>
            <person name="Hide W."/>
            <person name="Bult C."/>
            <person name="Grimmond S.M."/>
            <person name="Teasdale R.D."/>
            <person name="Liu E.T."/>
            <person name="Brusic V."/>
            <person name="Quackenbush J."/>
            <person name="Wahlestedt C."/>
            <person name="Mattick J.S."/>
            <person name="Hume D.A."/>
            <person name="Kai C."/>
            <person name="Sasaki D."/>
            <person name="Tomaru Y."/>
            <person name="Fukuda S."/>
            <person name="Kanamori-Katayama M."/>
            <person name="Suzuki M."/>
            <person name="Aoki J."/>
            <person name="Arakawa T."/>
            <person name="Iida J."/>
            <person name="Imamura K."/>
            <person name="Itoh M."/>
            <person name="Kato T."/>
            <person name="Kawaji H."/>
            <person name="Kawagashira N."/>
            <person name="Kawashima T."/>
            <person name="Kojima M."/>
            <person name="Kondo S."/>
            <person name="Konno H."/>
            <person name="Nakano K."/>
            <person name="Ninomiya N."/>
            <person name="Nishio T."/>
            <person name="Okada M."/>
            <person name="Plessy C."/>
            <person name="Shibata K."/>
            <person name="Shiraki T."/>
            <person name="Suzuki S."/>
            <person name="Tagami M."/>
            <person name="Waki K."/>
            <person name="Watahiki A."/>
            <person name="Okamura-Oho Y."/>
            <person name="Suzuki H."/>
            <person name="Kawai J."/>
            <person name="Hayashizaki Y."/>
        </authorList>
    </citation>
    <scope>NUCLEOTIDE SEQUENCE [LARGE SCALE MRNA]</scope>
    <source>
        <strain>C57BL/6J</strain>
        <tissue>Aorta</tissue>
        <tissue>Bone marrow</tissue>
        <tissue>Embryonic spinal ganglion</tissue>
        <tissue>Eye</tissue>
        <tissue>Placenta</tissue>
        <tissue>Urinary bladder</tissue>
    </source>
</reference>
<reference key="2">
    <citation type="journal article" date="2009" name="PLoS Biol.">
        <title>Lineage-specific biology revealed by a finished genome assembly of the mouse.</title>
        <authorList>
            <person name="Church D.M."/>
            <person name="Goodstadt L."/>
            <person name="Hillier L.W."/>
            <person name="Zody M.C."/>
            <person name="Goldstein S."/>
            <person name="She X."/>
            <person name="Bult C.J."/>
            <person name="Agarwala R."/>
            <person name="Cherry J.L."/>
            <person name="DiCuccio M."/>
            <person name="Hlavina W."/>
            <person name="Kapustin Y."/>
            <person name="Meric P."/>
            <person name="Maglott D."/>
            <person name="Birtle Z."/>
            <person name="Marques A.C."/>
            <person name="Graves T."/>
            <person name="Zhou S."/>
            <person name="Teague B."/>
            <person name="Potamousis K."/>
            <person name="Churas C."/>
            <person name="Place M."/>
            <person name="Herschleb J."/>
            <person name="Runnheim R."/>
            <person name="Forrest D."/>
            <person name="Amos-Landgraf J."/>
            <person name="Schwartz D.C."/>
            <person name="Cheng Z."/>
            <person name="Lindblad-Toh K."/>
            <person name="Eichler E.E."/>
            <person name="Ponting C.P."/>
        </authorList>
    </citation>
    <scope>NUCLEOTIDE SEQUENCE [LARGE SCALE GENOMIC DNA]</scope>
    <source>
        <strain>C57BL/6J</strain>
    </source>
</reference>
<reference key="3">
    <citation type="journal article" date="2004" name="Genome Res.">
        <title>The status, quality, and expansion of the NIH full-length cDNA project: the Mammalian Gene Collection (MGC).</title>
        <authorList>
            <consortium name="The MGC Project Team"/>
        </authorList>
    </citation>
    <scope>NUCLEOTIDE SEQUENCE [LARGE SCALE MRNA]</scope>
    <source>
        <strain>C57BL/6J</strain>
        <strain>FVB/N</strain>
        <tissue>Liver</tissue>
        <tissue>Mammary gland</tissue>
        <tissue>Retina</tissue>
    </source>
</reference>
<reference key="4">
    <citation type="journal article" date="2010" name="Cell">
        <title>A tissue-specific atlas of mouse protein phosphorylation and expression.</title>
        <authorList>
            <person name="Huttlin E.L."/>
            <person name="Jedrychowski M.P."/>
            <person name="Elias J.E."/>
            <person name="Goswami T."/>
            <person name="Rad R."/>
            <person name="Beausoleil S.A."/>
            <person name="Villen J."/>
            <person name="Haas W."/>
            <person name="Sowa M.E."/>
            <person name="Gygi S.P."/>
        </authorList>
    </citation>
    <scope>IDENTIFICATION BY MASS SPECTROMETRY [LARGE SCALE ANALYSIS]</scope>
    <source>
        <tissue>Brain</tissue>
        <tissue>Brown adipose tissue</tissue>
        <tissue>Heart</tissue>
        <tissue>Kidney</tissue>
        <tissue>Liver</tissue>
        <tissue>Lung</tissue>
        <tissue>Pancreas</tissue>
        <tissue>Spleen</tissue>
        <tissue>Testis</tissue>
    </source>
</reference>
<reference key="5">
    <citation type="journal article" date="2013" name="Mol. Cell">
        <title>SIRT5-mediated lysine desuccinylation impacts diverse metabolic pathways.</title>
        <authorList>
            <person name="Park J."/>
            <person name="Chen Y."/>
            <person name="Tishkoff D.X."/>
            <person name="Peng C."/>
            <person name="Tan M."/>
            <person name="Dai L."/>
            <person name="Xie Z."/>
            <person name="Zhang Y."/>
            <person name="Zwaans B.M."/>
            <person name="Skinner M.E."/>
            <person name="Lombard D.B."/>
            <person name="Zhao Y."/>
        </authorList>
    </citation>
    <scope>ACETYLATION [LARGE SCALE ANALYSIS] AT LYS-391</scope>
    <scope>IDENTIFICATION BY MASS SPECTROMETRY [LARGE SCALE ANALYSIS]</scope>
    <source>
        <tissue>Embryonic fibroblast</tissue>
    </source>
</reference>
<comment type="function">
    <text evidence="1">The normal physiological role of BLM hydrolase is unknown, but it catalyzes the inactivation of the antitumor drug BLM (a glycopeptide) by hydrolyzing the carboxamide bond of its B-aminoalaninamide moiety thus protecting normal and malignant cells from BLM toxicity.</text>
</comment>
<comment type="catalytic activity">
    <reaction>
        <text>Inactivates bleomycin B2 (a cytotoxic glycometallopeptide) by hydrolysis of a carboxyamide bond of beta-aminoalanine, but also shows general aminopeptidase activity. The specificity varies somewhat with source, but amino acid arylamides of Met, Leu and Ala are preferred.</text>
        <dbReference type="EC" id="3.4.22.40"/>
    </reaction>
</comment>
<comment type="subunit">
    <text evidence="3">Homohexamer (By similarity). Interacts with NUDT12 (via ANK repeats) (By similarity).</text>
</comment>
<comment type="subcellular location">
    <subcellularLocation>
        <location evidence="3">Cytoplasm</location>
    </subcellularLocation>
    <subcellularLocation>
        <location evidence="3">Cytoplasmic granule</location>
    </subcellularLocation>
    <text evidence="3">Co-localizes with NUDT12 in the cytoplasmic granules.</text>
</comment>
<comment type="similarity">
    <text evidence="4">Belongs to the peptidase C1 family.</text>
</comment>